<feature type="chain" id="PRO_1000205023" description="Prefoldin subunit beta">
    <location>
        <begin position="1"/>
        <end position="126"/>
    </location>
</feature>
<comment type="function">
    <text evidence="1">Molecular chaperone capable of stabilizing a range of proteins. Seems to fulfill an ATP-independent, HSP70-like function in archaeal de novo protein folding.</text>
</comment>
<comment type="subunit">
    <text evidence="1">Heterohexamer of two alpha and four beta subunits.</text>
</comment>
<comment type="subcellular location">
    <subcellularLocation>
        <location evidence="1">Cytoplasm</location>
    </subcellularLocation>
</comment>
<comment type="similarity">
    <text evidence="1">Belongs to the prefoldin subunit beta family.</text>
</comment>
<accession>C3NED4</accession>
<gene>
    <name evidence="1" type="primary">pfdB</name>
    <name type="ordered locus">YG5714_1406</name>
</gene>
<keyword id="KW-0143">Chaperone</keyword>
<keyword id="KW-0963">Cytoplasm</keyword>
<reference key="1">
    <citation type="journal article" date="2009" name="Proc. Natl. Acad. Sci. U.S.A.">
        <title>Biogeography of the Sulfolobus islandicus pan-genome.</title>
        <authorList>
            <person name="Reno M.L."/>
            <person name="Held N.L."/>
            <person name="Fields C.J."/>
            <person name="Burke P.V."/>
            <person name="Whitaker R.J."/>
        </authorList>
    </citation>
    <scope>NUCLEOTIDE SEQUENCE [LARGE SCALE GENOMIC DNA]</scope>
    <source>
        <strain>Y.G.57.14 / Yellowstone #1</strain>
    </source>
</reference>
<protein>
    <recommendedName>
        <fullName evidence="1">Prefoldin subunit beta</fullName>
    </recommendedName>
    <alternativeName>
        <fullName evidence="1">GimC subunit beta</fullName>
    </alternativeName>
</protein>
<proteinExistence type="inferred from homology"/>
<evidence type="ECO:0000255" key="1">
    <source>
        <dbReference type="HAMAP-Rule" id="MF_00307"/>
    </source>
</evidence>
<sequence>MAEKLPPEVQAQLAKFQQLKDQLDRLLLEKSTIENELREINKVLEELSVLNADATIYKIVGNLLVKSDKTSVEKELNDRKELLELRSRTYQKQESILRKQLEDLQAKINEMLSKYYPQGGQTGIKA</sequence>
<name>PFDB_SACI7</name>
<dbReference type="EMBL" id="CP001403">
    <property type="protein sequence ID" value="ACP45673.1"/>
    <property type="molecule type" value="Genomic_DNA"/>
</dbReference>
<dbReference type="RefSeq" id="WP_012711409.1">
    <property type="nucleotide sequence ID" value="NC_012622.1"/>
</dbReference>
<dbReference type="SMR" id="C3NED4"/>
<dbReference type="KEGG" id="siy:YG5714_1406"/>
<dbReference type="HOGENOM" id="CLU_131909_2_1_2"/>
<dbReference type="Proteomes" id="UP000002308">
    <property type="component" value="Chromosome"/>
</dbReference>
<dbReference type="GO" id="GO:0005737">
    <property type="term" value="C:cytoplasm"/>
    <property type="evidence" value="ECO:0007669"/>
    <property type="project" value="UniProtKB-SubCell"/>
</dbReference>
<dbReference type="GO" id="GO:0016272">
    <property type="term" value="C:prefoldin complex"/>
    <property type="evidence" value="ECO:0007669"/>
    <property type="project" value="UniProtKB-UniRule"/>
</dbReference>
<dbReference type="GO" id="GO:0051087">
    <property type="term" value="F:protein-folding chaperone binding"/>
    <property type="evidence" value="ECO:0007669"/>
    <property type="project" value="TreeGrafter"/>
</dbReference>
<dbReference type="GO" id="GO:0051082">
    <property type="term" value="F:unfolded protein binding"/>
    <property type="evidence" value="ECO:0007669"/>
    <property type="project" value="UniProtKB-UniRule"/>
</dbReference>
<dbReference type="GO" id="GO:0051131">
    <property type="term" value="P:chaperone-mediated protein complex assembly"/>
    <property type="evidence" value="ECO:0007669"/>
    <property type="project" value="TreeGrafter"/>
</dbReference>
<dbReference type="GO" id="GO:0006457">
    <property type="term" value="P:protein folding"/>
    <property type="evidence" value="ECO:0007669"/>
    <property type="project" value="UniProtKB-UniRule"/>
</dbReference>
<dbReference type="CDD" id="cd23162">
    <property type="entry name" value="Prefoldin_beta_GimC"/>
    <property type="match status" value="1"/>
</dbReference>
<dbReference type="FunFam" id="1.10.287.370:FF:000013">
    <property type="entry name" value="Prefoldin subunit beta"/>
    <property type="match status" value="1"/>
</dbReference>
<dbReference type="Gene3D" id="1.10.287.370">
    <property type="match status" value="1"/>
</dbReference>
<dbReference type="HAMAP" id="MF_00307">
    <property type="entry name" value="PfdB"/>
    <property type="match status" value="1"/>
</dbReference>
<dbReference type="InterPro" id="IPR002777">
    <property type="entry name" value="PFD_beta-like"/>
</dbReference>
<dbReference type="InterPro" id="IPR012713">
    <property type="entry name" value="PfdB"/>
</dbReference>
<dbReference type="InterPro" id="IPR009053">
    <property type="entry name" value="Prefoldin"/>
</dbReference>
<dbReference type="NCBIfam" id="TIGR02338">
    <property type="entry name" value="gimC_beta"/>
    <property type="match status" value="1"/>
</dbReference>
<dbReference type="PANTHER" id="PTHR21431">
    <property type="entry name" value="PREFOLDIN SUBUNIT 6"/>
    <property type="match status" value="1"/>
</dbReference>
<dbReference type="PANTHER" id="PTHR21431:SF0">
    <property type="entry name" value="PREFOLDIN SUBUNIT 6"/>
    <property type="match status" value="1"/>
</dbReference>
<dbReference type="Pfam" id="PF01920">
    <property type="entry name" value="Prefoldin_2"/>
    <property type="match status" value="1"/>
</dbReference>
<dbReference type="SUPFAM" id="SSF46579">
    <property type="entry name" value="Prefoldin"/>
    <property type="match status" value="1"/>
</dbReference>
<organism>
    <name type="scientific">Saccharolobus islandicus (strain Y.G.57.14 / Yellowstone #1)</name>
    <name type="common">Sulfolobus islandicus</name>
    <dbReference type="NCBI Taxonomy" id="439386"/>
    <lineage>
        <taxon>Archaea</taxon>
        <taxon>Thermoproteota</taxon>
        <taxon>Thermoprotei</taxon>
        <taxon>Sulfolobales</taxon>
        <taxon>Sulfolobaceae</taxon>
        <taxon>Saccharolobus</taxon>
    </lineage>
</organism>